<gene>
    <name type="primary">PBP1</name>
    <name type="synonym">KRP2</name>
    <name type="ordered locus">At5g54490</name>
    <name type="ORF">F24B18.11</name>
</gene>
<dbReference type="EMBL" id="AY363868">
    <property type="protein sequence ID" value="AAR16086.1"/>
    <property type="molecule type" value="mRNA"/>
</dbReference>
<dbReference type="EMBL" id="AB026634">
    <property type="protein sequence ID" value="BAA97522.1"/>
    <property type="molecule type" value="Genomic_DNA"/>
</dbReference>
<dbReference type="EMBL" id="CP002688">
    <property type="protein sequence ID" value="AED96501.1"/>
    <property type="molecule type" value="Genomic_DNA"/>
</dbReference>
<dbReference type="EMBL" id="BT024572">
    <property type="protein sequence ID" value="ABD38911.1"/>
    <property type="molecule type" value="mRNA"/>
</dbReference>
<dbReference type="EMBL" id="AY084485">
    <property type="protein sequence ID" value="AAM61056.1"/>
    <property type="molecule type" value="mRNA"/>
</dbReference>
<dbReference type="RefSeq" id="NP_200260.1">
    <property type="nucleotide sequence ID" value="NM_124829.2"/>
</dbReference>
<dbReference type="SMR" id="Q9LSQ6"/>
<dbReference type="BioGRID" id="20781">
    <property type="interactions" value="2"/>
</dbReference>
<dbReference type="FunCoup" id="Q9LSQ6">
    <property type="interactions" value="36"/>
</dbReference>
<dbReference type="IntAct" id="Q9LSQ6">
    <property type="interactions" value="2"/>
</dbReference>
<dbReference type="STRING" id="3702.Q9LSQ6"/>
<dbReference type="PaxDb" id="3702-AT5G54490.1"/>
<dbReference type="EnsemblPlants" id="AT5G54490.1">
    <property type="protein sequence ID" value="AT5G54490.1"/>
    <property type="gene ID" value="AT5G54490"/>
</dbReference>
<dbReference type="GeneID" id="835537"/>
<dbReference type="Gramene" id="AT5G54490.1">
    <property type="protein sequence ID" value="AT5G54490.1"/>
    <property type="gene ID" value="AT5G54490"/>
</dbReference>
<dbReference type="KEGG" id="ath:AT5G54490"/>
<dbReference type="Araport" id="AT5G54490"/>
<dbReference type="TAIR" id="AT5G54490">
    <property type="gene designation" value="PBP1"/>
</dbReference>
<dbReference type="eggNOG" id="KOG0028">
    <property type="taxonomic scope" value="Eukaryota"/>
</dbReference>
<dbReference type="HOGENOM" id="CLU_137017_1_0_1"/>
<dbReference type="InParanoid" id="Q9LSQ6"/>
<dbReference type="OMA" id="FPTMAGK"/>
<dbReference type="PhylomeDB" id="Q9LSQ6"/>
<dbReference type="PRO" id="PR:Q9LSQ6"/>
<dbReference type="Proteomes" id="UP000006548">
    <property type="component" value="Chromosome 5"/>
</dbReference>
<dbReference type="ExpressionAtlas" id="Q9LSQ6">
    <property type="expression patterns" value="baseline and differential"/>
</dbReference>
<dbReference type="GO" id="GO:0005509">
    <property type="term" value="F:calcium ion binding"/>
    <property type="evidence" value="ECO:0000250"/>
    <property type="project" value="TAIR"/>
</dbReference>
<dbReference type="GO" id="GO:0071456">
    <property type="term" value="P:cellular response to hypoxia"/>
    <property type="evidence" value="ECO:0007007"/>
    <property type="project" value="TAIR"/>
</dbReference>
<dbReference type="GO" id="GO:0009733">
    <property type="term" value="P:response to auxin"/>
    <property type="evidence" value="ECO:0000270"/>
    <property type="project" value="TAIR"/>
</dbReference>
<dbReference type="FunFam" id="1.10.238.10:FF:000335">
    <property type="entry name" value="Calcium-binding protein KIC"/>
    <property type="match status" value="1"/>
</dbReference>
<dbReference type="Gene3D" id="1.10.238.10">
    <property type="entry name" value="EF-hand"/>
    <property type="match status" value="1"/>
</dbReference>
<dbReference type="InterPro" id="IPR011992">
    <property type="entry name" value="EF-hand-dom_pair"/>
</dbReference>
<dbReference type="InterPro" id="IPR018247">
    <property type="entry name" value="EF_Hand_1_Ca_BS"/>
</dbReference>
<dbReference type="InterPro" id="IPR002048">
    <property type="entry name" value="EF_hand_dom"/>
</dbReference>
<dbReference type="InterPro" id="IPR044205">
    <property type="entry name" value="KIC/PBP1/KRP1"/>
</dbReference>
<dbReference type="PANTHER" id="PTHR47319">
    <property type="entry name" value="CALCIUM-BINDING PROTEIN KIC"/>
    <property type="match status" value="1"/>
</dbReference>
<dbReference type="PANTHER" id="PTHR47319:SF15">
    <property type="entry name" value="CALCIUM-BINDING PROTEIN PBP1"/>
    <property type="match status" value="1"/>
</dbReference>
<dbReference type="Pfam" id="PF13833">
    <property type="entry name" value="EF-hand_8"/>
    <property type="match status" value="1"/>
</dbReference>
<dbReference type="SUPFAM" id="SSF47473">
    <property type="entry name" value="EF-hand"/>
    <property type="match status" value="1"/>
</dbReference>
<dbReference type="PROSITE" id="PS00018">
    <property type="entry name" value="EF_HAND_1"/>
    <property type="match status" value="1"/>
</dbReference>
<dbReference type="PROSITE" id="PS50222">
    <property type="entry name" value="EF_HAND_2"/>
    <property type="match status" value="1"/>
</dbReference>
<protein>
    <recommendedName>
        <fullName>Calcium-binding protein PBP1</fullName>
    </recommendedName>
    <alternativeName>
        <fullName>KIC-related protein 2</fullName>
    </alternativeName>
    <alternativeName>
        <fullName>PINOID-binding protein 1</fullName>
    </alternativeName>
</protein>
<reference key="1">
    <citation type="journal article" date="2004" name="Plant Cell">
        <title>KIC, a novel Ca2+ binding protein with one EF-hand motif, interacts with a microtubule motor protein and regulates trichome morphogenesis.</title>
        <authorList>
            <person name="Reddy V.S."/>
            <person name="Day I.S."/>
            <person name="Thomas T."/>
            <person name="Reddy A.S.N."/>
        </authorList>
    </citation>
    <scope>NUCLEOTIDE SEQUENCE [MRNA]</scope>
    <scope>FUNCTION</scope>
</reference>
<reference key="2">
    <citation type="submission" date="1999-05" db="EMBL/GenBank/DDBJ databases">
        <title>Structural analysis of Arabidopsis thaliana chromosome 5. XI.</title>
        <authorList>
            <person name="Kaneko T."/>
            <person name="Katoh T."/>
            <person name="Asamizu E."/>
            <person name="Sato S."/>
            <person name="Nakamura Y."/>
            <person name="Kotani H."/>
            <person name="Tabata S."/>
        </authorList>
    </citation>
    <scope>NUCLEOTIDE SEQUENCE [LARGE SCALE GENOMIC DNA]</scope>
    <source>
        <strain>cv. Columbia</strain>
    </source>
</reference>
<reference key="3">
    <citation type="journal article" date="2017" name="Plant J.">
        <title>Araport11: a complete reannotation of the Arabidopsis thaliana reference genome.</title>
        <authorList>
            <person name="Cheng C.Y."/>
            <person name="Krishnakumar V."/>
            <person name="Chan A.P."/>
            <person name="Thibaud-Nissen F."/>
            <person name="Schobel S."/>
            <person name="Town C.D."/>
        </authorList>
    </citation>
    <scope>GENOME REANNOTATION</scope>
    <source>
        <strain>cv. Columbia</strain>
    </source>
</reference>
<reference key="4">
    <citation type="submission" date="2006-02" db="EMBL/GenBank/DDBJ databases">
        <title>Arabidopsis ORF clones.</title>
        <authorList>
            <person name="Shinn P."/>
            <person name="Chen H."/>
            <person name="Kim C.J."/>
            <person name="Ecker J.R."/>
        </authorList>
    </citation>
    <scope>NUCLEOTIDE SEQUENCE [LARGE SCALE MRNA]</scope>
    <source>
        <strain>cv. Columbia</strain>
    </source>
</reference>
<reference key="5">
    <citation type="submission" date="2002-03" db="EMBL/GenBank/DDBJ databases">
        <title>Full-length cDNA from Arabidopsis thaliana.</title>
        <authorList>
            <person name="Brover V.V."/>
            <person name="Troukhan M.E."/>
            <person name="Alexandrov N.A."/>
            <person name="Lu Y.-P."/>
            <person name="Flavell R.B."/>
            <person name="Feldmann K.A."/>
        </authorList>
    </citation>
    <scope>NUCLEOTIDE SEQUENCE [LARGE SCALE MRNA]</scope>
</reference>
<reference key="6">
    <citation type="journal article" date="2003" name="Plant Physiol.">
        <title>PINOID-mediated signaling involves calcium-binding proteins.</title>
        <authorList>
            <person name="Benjamins R."/>
            <person name="Ampudia C.S."/>
            <person name="Hooykaas P.J."/>
            <person name="Offringa R."/>
        </authorList>
    </citation>
    <scope>INTERACTION WITH PID</scope>
    <scope>INDUCTION BY AUXIN</scope>
</reference>
<organism>
    <name type="scientific">Arabidopsis thaliana</name>
    <name type="common">Mouse-ear cress</name>
    <dbReference type="NCBI Taxonomy" id="3702"/>
    <lineage>
        <taxon>Eukaryota</taxon>
        <taxon>Viridiplantae</taxon>
        <taxon>Streptophyta</taxon>
        <taxon>Embryophyta</taxon>
        <taxon>Tracheophyta</taxon>
        <taxon>Spermatophyta</taxon>
        <taxon>Magnoliopsida</taxon>
        <taxon>eudicotyledons</taxon>
        <taxon>Gunneridae</taxon>
        <taxon>Pentapetalae</taxon>
        <taxon>rosids</taxon>
        <taxon>malvids</taxon>
        <taxon>Brassicales</taxon>
        <taxon>Brassicaceae</taxon>
        <taxon>Camelineae</taxon>
        <taxon>Arabidopsis</taxon>
    </lineage>
</organism>
<accession>Q9LSQ6</accession>
<accession>Q8LG35</accession>
<name>PBP1_ARATH</name>
<keyword id="KW-0106">Calcium</keyword>
<keyword id="KW-0479">Metal-binding</keyword>
<keyword id="KW-1185">Reference proteome</keyword>
<sequence length="127" mass="14468">MASPKSSTRPNQENQEPQFQDFFPTMAGKLGGEGLIEEICKGFELLMDKDKGVITFESLRRNASTVLGLGDLTDDDVRYMINEGDFDRDGALNQMEFCVLMFRLSPELMEASRCVVTEVIEEEFYRH</sequence>
<proteinExistence type="evidence at protein level"/>
<feature type="chain" id="PRO_0000411974" description="Calcium-binding protein PBP1">
    <location>
        <begin position="1"/>
        <end position="127"/>
    </location>
</feature>
<feature type="domain" description="EF-hand" evidence="1">
    <location>
        <begin position="72"/>
        <end position="107"/>
    </location>
</feature>
<feature type="region of interest" description="Disordered" evidence="2">
    <location>
        <begin position="1"/>
        <end position="20"/>
    </location>
</feature>
<feature type="compositionally biased region" description="Polar residues" evidence="2">
    <location>
        <begin position="1"/>
        <end position="18"/>
    </location>
</feature>
<feature type="binding site" evidence="1">
    <location>
        <position position="85"/>
    </location>
    <ligand>
        <name>Ca(2+)</name>
        <dbReference type="ChEBI" id="CHEBI:29108"/>
    </ligand>
</feature>
<feature type="binding site" evidence="1">
    <location>
        <position position="87"/>
    </location>
    <ligand>
        <name>Ca(2+)</name>
        <dbReference type="ChEBI" id="CHEBI:29108"/>
    </ligand>
</feature>
<feature type="binding site" evidence="1">
    <location>
        <position position="89"/>
    </location>
    <ligand>
        <name>Ca(2+)</name>
        <dbReference type="ChEBI" id="CHEBI:29108"/>
    </ligand>
</feature>
<feature type="binding site" evidence="1">
    <location>
        <position position="96"/>
    </location>
    <ligand>
        <name>Ca(2+)</name>
        <dbReference type="ChEBI" id="CHEBI:29108"/>
    </ligand>
</feature>
<feature type="sequence conflict" description="In Ref. 5; AAM61056." evidence="5" ref="5">
    <original>K</original>
    <variation>T</variation>
    <location>
        <position position="5"/>
    </location>
</feature>
<evidence type="ECO:0000255" key="1">
    <source>
        <dbReference type="PROSITE-ProRule" id="PRU00448"/>
    </source>
</evidence>
<evidence type="ECO:0000256" key="2">
    <source>
        <dbReference type="SAM" id="MobiDB-lite"/>
    </source>
</evidence>
<evidence type="ECO:0000269" key="3">
    <source>
    </source>
</evidence>
<evidence type="ECO:0000269" key="4">
    <source>
    </source>
</evidence>
<evidence type="ECO:0000305" key="5"/>
<comment type="function">
    <text evidence="4">Potential calcium sensor that binds calcium in vitro.</text>
</comment>
<comment type="subunit">
    <text evidence="3">Interacts with PID.</text>
</comment>
<comment type="interaction">
    <interactant intactId="EBI-1393367">
        <id>Q9LSQ6</id>
    </interactant>
    <interactant intactId="EBI-1393382">
        <id>O64682</id>
        <label>PID</label>
    </interactant>
    <organismsDiffer>false</organismsDiffer>
    <experiments>4</experiments>
</comment>
<comment type="induction">
    <text evidence="3">By auxin.</text>
</comment>